<keyword id="KW-0066">ATP synthesis</keyword>
<keyword id="KW-0138">CF(0)</keyword>
<keyword id="KW-0150">Chloroplast</keyword>
<keyword id="KW-0375">Hydrogen ion transport</keyword>
<keyword id="KW-0406">Ion transport</keyword>
<keyword id="KW-0472">Membrane</keyword>
<keyword id="KW-0934">Plastid</keyword>
<keyword id="KW-0793">Thylakoid</keyword>
<keyword id="KW-0812">Transmembrane</keyword>
<keyword id="KW-1133">Transmembrane helix</keyword>
<keyword id="KW-0813">Transport</keyword>
<proteinExistence type="inferred from homology"/>
<protein>
    <recommendedName>
        <fullName evidence="1">ATP synthase subunit a, chloroplastic</fullName>
    </recommendedName>
    <alternativeName>
        <fullName evidence="1">ATP synthase F0 sector subunit a</fullName>
    </alternativeName>
    <alternativeName>
        <fullName evidence="1">F-ATPase subunit IV</fullName>
    </alternativeName>
</protein>
<feature type="chain" id="PRO_0000362605" description="ATP synthase subunit a, chloroplastic">
    <location>
        <begin position="1"/>
        <end position="248"/>
    </location>
</feature>
<feature type="transmembrane region" description="Helical" evidence="1">
    <location>
        <begin position="38"/>
        <end position="58"/>
    </location>
</feature>
<feature type="transmembrane region" description="Helical" evidence="1">
    <location>
        <begin position="96"/>
        <end position="116"/>
    </location>
</feature>
<feature type="transmembrane region" description="Helical" evidence="1">
    <location>
        <begin position="135"/>
        <end position="155"/>
    </location>
</feature>
<feature type="transmembrane region" description="Helical" evidence="1">
    <location>
        <begin position="200"/>
        <end position="220"/>
    </location>
</feature>
<feature type="transmembrane region" description="Helical" evidence="1">
    <location>
        <begin position="221"/>
        <end position="241"/>
    </location>
</feature>
<accession>B2Y1V9</accession>
<accession>B7ZI49</accession>
<gene>
    <name evidence="1" type="primary">atpI</name>
</gene>
<organism>
    <name type="scientific">Welwitschia mirabilis</name>
    <name type="common">Tree tumbo</name>
    <name type="synonym">Welwitschia bainesii</name>
    <dbReference type="NCBI Taxonomy" id="3377"/>
    <lineage>
        <taxon>Eukaryota</taxon>
        <taxon>Viridiplantae</taxon>
        <taxon>Streptophyta</taxon>
        <taxon>Embryophyta</taxon>
        <taxon>Tracheophyta</taxon>
        <taxon>Spermatophyta</taxon>
        <taxon>Gnetopsida</taxon>
        <taxon>Gnetidae</taxon>
        <taxon>Welwitschiales</taxon>
        <taxon>Welwitschiaceae</taxon>
        <taxon>Welwitschia</taxon>
    </lineage>
</organism>
<sequence length="248" mass="27305">MHIIQNTITILNNFVDISGVEVGQHLYWQIGNFEVHGQVLLTSWFVLAVLLGLAVLTVRDPQTIPTGQQNFAEYLLEFIRDLARTQIGEEEYISWVPFIGTLFLFIFVSNWSGALVPWGVVKLPHGELAAPTNDINTTVALALLTSVAYFYAGLAKKGLSFFGKYIQPTPILLPINILEDFTKPLSLSFRLFGNILADELVVAVLVSLVPLVVPIPVMLLGLFTSGIQALIFATLAAAYIGESLENHH</sequence>
<comment type="function">
    <text evidence="1">Key component of the proton channel; it plays a direct role in the translocation of protons across the membrane.</text>
</comment>
<comment type="subunit">
    <text evidence="1">F-type ATPases have 2 components, CF(1) - the catalytic core - and CF(0) - the membrane proton channel. CF(1) has five subunits: alpha(3), beta(3), gamma(1), delta(1), epsilon(1). CF(0) has four main subunits: a, b, b' and c.</text>
</comment>
<comment type="subcellular location">
    <subcellularLocation>
        <location evidence="1">Plastid</location>
        <location evidence="1">Chloroplast thylakoid membrane</location>
        <topology evidence="1">Multi-pass membrane protein</topology>
    </subcellularLocation>
</comment>
<comment type="similarity">
    <text evidence="1">Belongs to the ATPase A chain family.</text>
</comment>
<evidence type="ECO:0000255" key="1">
    <source>
        <dbReference type="HAMAP-Rule" id="MF_01393"/>
    </source>
</evidence>
<reference key="1">
    <citation type="journal article" date="2008" name="BMC Evol. Biol.">
        <title>The complete plastid genome sequence of Welwitschia mirabilis: an unusually compact plastome with accelerated divergence rates.</title>
        <authorList>
            <person name="McCoy S.R."/>
            <person name="Kuehl J.V."/>
            <person name="Boore J.L."/>
            <person name="Raubeson L.A."/>
        </authorList>
    </citation>
    <scope>NUCLEOTIDE SEQUENCE [LARGE SCALE GENOMIC DNA]</scope>
</reference>
<reference key="2">
    <citation type="journal article" date="2009" name="Mol. Phylogenet. Evol.">
        <title>Evolution of reduced and compact chloroplast genomes (cpDNAs) in gnetophytes: Selection toward a lower-cost strategy.</title>
        <authorList>
            <person name="Wu C.-S."/>
            <person name="Lai Y.-T."/>
            <person name="Lin C.-P."/>
            <person name="Wang Y.-N."/>
            <person name="Chaw S.-M."/>
        </authorList>
    </citation>
    <scope>NUCLEOTIDE SEQUENCE [LARGE SCALE GENOMIC DNA]</scope>
</reference>
<dbReference type="EMBL" id="EU342371">
    <property type="protein sequence ID" value="ABY26789.1"/>
    <property type="molecule type" value="Genomic_DNA"/>
</dbReference>
<dbReference type="EMBL" id="AP009568">
    <property type="protein sequence ID" value="BAH11229.1"/>
    <property type="molecule type" value="Genomic_DNA"/>
</dbReference>
<dbReference type="RefSeq" id="YP_001876576.1">
    <property type="nucleotide sequence ID" value="NC_010654.1"/>
</dbReference>
<dbReference type="SMR" id="B2Y1V9"/>
<dbReference type="GeneID" id="6276167"/>
<dbReference type="OMA" id="GFFWAAF"/>
<dbReference type="GO" id="GO:0009535">
    <property type="term" value="C:chloroplast thylakoid membrane"/>
    <property type="evidence" value="ECO:0007669"/>
    <property type="project" value="UniProtKB-SubCell"/>
</dbReference>
<dbReference type="GO" id="GO:0005886">
    <property type="term" value="C:plasma membrane"/>
    <property type="evidence" value="ECO:0007669"/>
    <property type="project" value="UniProtKB-UniRule"/>
</dbReference>
<dbReference type="GO" id="GO:0045259">
    <property type="term" value="C:proton-transporting ATP synthase complex"/>
    <property type="evidence" value="ECO:0007669"/>
    <property type="project" value="UniProtKB-KW"/>
</dbReference>
<dbReference type="GO" id="GO:0046933">
    <property type="term" value="F:proton-transporting ATP synthase activity, rotational mechanism"/>
    <property type="evidence" value="ECO:0007669"/>
    <property type="project" value="UniProtKB-UniRule"/>
</dbReference>
<dbReference type="CDD" id="cd00310">
    <property type="entry name" value="ATP-synt_Fo_a_6"/>
    <property type="match status" value="1"/>
</dbReference>
<dbReference type="FunFam" id="1.20.120.220:FF:000001">
    <property type="entry name" value="ATP synthase subunit a, chloroplastic"/>
    <property type="match status" value="1"/>
</dbReference>
<dbReference type="Gene3D" id="1.20.120.220">
    <property type="entry name" value="ATP synthase, F0 complex, subunit A"/>
    <property type="match status" value="1"/>
</dbReference>
<dbReference type="HAMAP" id="MF_01393">
    <property type="entry name" value="ATP_synth_a_bact"/>
    <property type="match status" value="1"/>
</dbReference>
<dbReference type="InterPro" id="IPR045082">
    <property type="entry name" value="ATP_syn_F0_a_bact/chloroplast"/>
</dbReference>
<dbReference type="InterPro" id="IPR000568">
    <property type="entry name" value="ATP_synth_F0_asu"/>
</dbReference>
<dbReference type="InterPro" id="IPR023011">
    <property type="entry name" value="ATP_synth_F0_asu_AS"/>
</dbReference>
<dbReference type="InterPro" id="IPR035908">
    <property type="entry name" value="F0_ATP_A_sf"/>
</dbReference>
<dbReference type="NCBIfam" id="TIGR01131">
    <property type="entry name" value="ATP_synt_6_or_A"/>
    <property type="match status" value="1"/>
</dbReference>
<dbReference type="PANTHER" id="PTHR42823">
    <property type="entry name" value="ATP SYNTHASE SUBUNIT A, CHLOROPLASTIC"/>
    <property type="match status" value="1"/>
</dbReference>
<dbReference type="PANTHER" id="PTHR42823:SF3">
    <property type="entry name" value="ATP SYNTHASE SUBUNIT A, CHLOROPLASTIC"/>
    <property type="match status" value="1"/>
</dbReference>
<dbReference type="Pfam" id="PF00119">
    <property type="entry name" value="ATP-synt_A"/>
    <property type="match status" value="1"/>
</dbReference>
<dbReference type="PRINTS" id="PR00123">
    <property type="entry name" value="ATPASEA"/>
</dbReference>
<dbReference type="SUPFAM" id="SSF81336">
    <property type="entry name" value="F1F0 ATP synthase subunit A"/>
    <property type="match status" value="1"/>
</dbReference>
<dbReference type="PROSITE" id="PS00449">
    <property type="entry name" value="ATPASE_A"/>
    <property type="match status" value="1"/>
</dbReference>
<geneLocation type="chloroplast"/>
<name>ATPI_WELMI</name>